<organismHost>
    <name type="scientific">Pan troglodytes</name>
    <name type="common">Chimpanzee</name>
    <dbReference type="NCBI Taxonomy" id="9598"/>
</organismHost>
<organism>
    <name type="scientific">Simian foamy virus (isolate chimpanzee)</name>
    <name type="common">SFVcpz</name>
    <dbReference type="NCBI Taxonomy" id="298339"/>
    <lineage>
        <taxon>Viruses</taxon>
        <taxon>Riboviria</taxon>
        <taxon>Pararnavirae</taxon>
        <taxon>Artverviricota</taxon>
        <taxon>Revtraviricetes</taxon>
        <taxon>Ortervirales</taxon>
        <taxon>Retroviridae</taxon>
        <taxon>Spumaretrovirinae</taxon>
        <taxon>Spumavirus</taxon>
        <taxon>Simian foamy virus</taxon>
    </lineage>
</organism>
<sequence length="653" mass="70762">MASGSNVEEYELDVEALVVILRDRNIGRNPLHGEIIGLRLTEGWWGQLERFQMVRLILQDEDNEPLQRPRHEIIPRAVNPHTMFVLSGPLAELQLAFQDLDLPEGPLRFGPLANGHYVEGDPYSRSYRPVTMAETAQMTRDELEDTLNTQSEIEIQMINLLELYEVETRALRRQLAERSSIGQGGISPGASHSRPPVSSFSGLPSLPAIPGIHTRAPSPPRATSTPGNIPRSLGDDNMPSSSFAGPSQPRVSFHPGNPFAEAEGHRPRSQSRERRRDIPSAPVISAPVPSAPPMIQYIPVPPPPPVGAVIPIQHIRSVTGEPPRNPREIPIWLGRNAPAIDGVFPTTTPDLRCRIINALLGGNLGLSLTPGDCITWDSAVATLFIRTYGQYPLHQLGNVLKGIADQEGVATAYTLGMMLSGQNYQLVSGIIRGYLPGQAVVTAMQQRLDQEIDDQTRAETFIQHLNAVYEILGLNARGQSIRASVTPQPRPSRGRGRGQSAPEPSQGPVNSGRGRQCPAPGQNDRGSNIQNQGQENSSQGGYNLRSRTYQPQRYGGGRGRRWNENTNNSETRPTEQSPQTPRPIQAGSGVRGNQSQTYKPAAGRGGRGNQNRNQRSSGAGDSRAVNTVTQSATSSTDESSSTTTAAPSGGQGN</sequence>
<reference key="1">
    <citation type="journal article" date="1994" name="Virology">
        <title>Isolation, cloning, and sequencing of simian foamy viruses from chimpanzees (SFVcpz): high homology to human foamy virus (HFV).</title>
        <authorList>
            <person name="Herchenroder O."/>
            <person name="Renne R."/>
            <person name="Loncar D."/>
            <person name="Cobb E.K."/>
            <person name="Murthy K.K."/>
            <person name="Schneider J."/>
            <person name="Mergia A."/>
            <person name="Luciw P.A."/>
        </authorList>
    </citation>
    <scope>NUCLEOTIDE SEQUENCE [GENOMIC DNA]</scope>
</reference>
<dbReference type="EMBL" id="U04327">
    <property type="protein sequence ID" value="AAA19977.1"/>
    <property type="molecule type" value="Genomic_DNA"/>
</dbReference>
<dbReference type="RefSeq" id="NP_056802.1">
    <property type="nucleotide sequence ID" value="NC_001364.1"/>
</dbReference>
<dbReference type="SMR" id="Q87039"/>
<dbReference type="GeneID" id="1489964"/>
<dbReference type="KEGG" id="vg:1489964"/>
<dbReference type="Proteomes" id="UP000001063">
    <property type="component" value="Segment"/>
</dbReference>
<dbReference type="GO" id="GO:0043657">
    <property type="term" value="C:host cell"/>
    <property type="evidence" value="ECO:0007669"/>
    <property type="project" value="GOC"/>
</dbReference>
<dbReference type="GO" id="GO:0030430">
    <property type="term" value="C:host cell cytoplasm"/>
    <property type="evidence" value="ECO:0007669"/>
    <property type="project" value="UniProtKB-SubCell"/>
</dbReference>
<dbReference type="GO" id="GO:0042025">
    <property type="term" value="C:host cell nucleus"/>
    <property type="evidence" value="ECO:0000314"/>
    <property type="project" value="CACAO"/>
</dbReference>
<dbReference type="GO" id="GO:0044383">
    <property type="term" value="C:host chromosome"/>
    <property type="evidence" value="ECO:0000314"/>
    <property type="project" value="CACAO"/>
</dbReference>
<dbReference type="GO" id="GO:0044163">
    <property type="term" value="C:host cytoskeleton"/>
    <property type="evidence" value="ECO:0007669"/>
    <property type="project" value="InterPro"/>
</dbReference>
<dbReference type="GO" id="GO:0019013">
    <property type="term" value="C:viral nucleocapsid"/>
    <property type="evidence" value="ECO:0007669"/>
    <property type="project" value="UniProtKB-KW"/>
</dbReference>
<dbReference type="GO" id="GO:0003677">
    <property type="term" value="F:DNA binding"/>
    <property type="evidence" value="ECO:0007669"/>
    <property type="project" value="UniProtKB-KW"/>
</dbReference>
<dbReference type="GO" id="GO:0003723">
    <property type="term" value="F:RNA binding"/>
    <property type="evidence" value="ECO:0007669"/>
    <property type="project" value="UniProtKB-KW"/>
</dbReference>
<dbReference type="GO" id="GO:0075521">
    <property type="term" value="P:microtubule-dependent intracellular transport of viral material towards nucleus"/>
    <property type="evidence" value="ECO:0007669"/>
    <property type="project" value="UniProtKB-KW"/>
</dbReference>
<dbReference type="GO" id="GO:0046718">
    <property type="term" value="P:symbiont entry into host cell"/>
    <property type="evidence" value="ECO:0007669"/>
    <property type="project" value="UniProtKB-KW"/>
</dbReference>
<dbReference type="GO" id="GO:0039702">
    <property type="term" value="P:viral budding via host ESCRT complex"/>
    <property type="evidence" value="ECO:0007669"/>
    <property type="project" value="UniProtKB-KW"/>
</dbReference>
<dbReference type="GO" id="GO:0019076">
    <property type="term" value="P:viral release from host cell"/>
    <property type="evidence" value="ECO:0007669"/>
    <property type="project" value="InterPro"/>
</dbReference>
<dbReference type="Gene3D" id="1.20.5.1500">
    <property type="match status" value="1"/>
</dbReference>
<dbReference type="InterPro" id="IPR049099">
    <property type="entry name" value="Gag_C"/>
</dbReference>
<dbReference type="InterPro" id="IPR004957">
    <property type="entry name" value="Gag_N"/>
</dbReference>
<dbReference type="Pfam" id="PF20672">
    <property type="entry name" value="Gag_FV_central"/>
    <property type="match status" value="1"/>
</dbReference>
<dbReference type="Pfam" id="PF20673">
    <property type="entry name" value="Gag_spuma_C"/>
    <property type="match status" value="1"/>
</dbReference>
<dbReference type="Pfam" id="PF03276">
    <property type="entry name" value="Gag_spuma_N"/>
    <property type="match status" value="1"/>
</dbReference>
<gene>
    <name type="primary">gag</name>
</gene>
<keyword id="KW-0167">Capsid protein</keyword>
<keyword id="KW-1176">Cytoplasmic inwards viral transport</keyword>
<keyword id="KW-0238">DNA-binding</keyword>
<keyword id="KW-1035">Host cytoplasm</keyword>
<keyword id="KW-1048">Host nucleus</keyword>
<keyword id="KW-0945">Host-virus interaction</keyword>
<keyword id="KW-1177">Microtubular inwards viral transport</keyword>
<keyword id="KW-1185">Reference proteome</keyword>
<keyword id="KW-0694">RNA-binding</keyword>
<keyword id="KW-1198">Viral budding</keyword>
<keyword id="KW-1187">Viral budding via the host ESCRT complexes</keyword>
<keyword id="KW-0543">Viral nucleoprotein</keyword>
<keyword id="KW-1188">Viral release from host cell</keyword>
<keyword id="KW-0946">Virion</keyword>
<keyword id="KW-1160">Virus entry into host cell</keyword>
<comment type="function">
    <text evidence="1">Involved in capsid formation and genome binding. Shortly after infection, interaction between incoming particle-associated Gag proteins and host dynein allows centrosomal targeting of the viral genome (associated to Gag), prior to nucleus translocation and integration into host genome (By similarity).</text>
</comment>
<comment type="subunit">
    <molecule>Gag protein</molecule>
    <text evidence="1">Specifically interacts with the N-terminus of leader peptide. This specific interaction between Gag protein and Env glycoprotein may compensate for the lack of a Gag membrane targeting signal, and allow particle egress. The capsid is composed of multimeric Gag protein. Interacts with host TSG101. Interacts with host light chain cytoplasmic dynein DYNLL1; this interaction is critical for intracellular microtubule-dependent viral genome transport toward the centrosome (By similarity).</text>
</comment>
<comment type="subcellular location">
    <molecule>Gag protein</molecule>
    <subcellularLocation>
        <location>Virion</location>
    </subcellularLocation>
    <subcellularLocation>
        <location>Host nucleus</location>
    </subcellularLocation>
    <subcellularLocation>
        <location>Host cytoplasm</location>
    </subcellularLocation>
    <text evidence="1">Nuclear at initial phase, cytoplasmic at assembly. Shortly after infection, Gag protein is targeted to centrosomes. It is then actively transported into the nucleus thanks to its nuclear localization signal. In the late phases of infection, Gag proteins assemble in the cytoplasm to form the virion's capsids (By similarity).</text>
</comment>
<comment type="subcellular location">
    <molecule>p3</molecule>
    <subcellularLocation>
        <location evidence="1">Virion</location>
    </subcellularLocation>
</comment>
<comment type="domain">
    <text evidence="1">Gag protein contains 3 glycine-arginine motifs (GR-boxes) necessary for RNA packaging, the first of which has nucleic acid binding properties in vitro.</text>
</comment>
<comment type="domain">
    <text evidence="1">Late-budding 'domains' (L domains) are short sequence motifs essential for viral particle budding. They recruit proteins of the host ESCRT machinery (Endosomal Sorting Complex Required for Transport) or ESCRT-associated proteins. Nucleocapsid protein p14 contains one L domain: a PTAP/PSAP motif, which interacts with the UEV domain of TSG101 (By similarity).</text>
</comment>
<comment type="PTM">
    <text evidence="1">Specific enzymatic cleavages in vivo by viral protease yield mature proteins. The protease is not cleaved off from Pol. Since cleavage efficiency is not optimal for all sites, intermediary molecules are expressed (By similarity).</text>
</comment>
<comment type="miscellaneous">
    <text>Foamy viruses are distinct from other retroviruses in many respects. Their protease is active as an uncleaved Pro-Pol protein. Mature particles do not include the usual processed retroviral structural protein (MA, CA and NC), but instead contain two large Gag proteins. Their functional nucleic acid appears to be either RNA or dsDNA (up to 20% of extracellular particles), because they probably proceed either to an early (before integration) or late reverse transcription (after assembly). Foamy viruses have the ability to retrotranspose intracellularly with high efficiency. They bud predominantly into the endoplasmic reticulum (ER) and occasionally at the plasma membrane. Budding requires the presence of Env proteins. Most viral particles probably remain within the infected cell.</text>
</comment>
<name>GAG_SFVCP</name>
<proteinExistence type="inferred from homology"/>
<accession>Q87039</accession>
<feature type="chain" id="PRO_0000378591" description="Gag polyprotein">
    <location>
        <begin position="1"/>
        <end position="653"/>
    </location>
</feature>
<feature type="chain" id="PRO_0000378592" description="Gag protein" evidence="1">
    <location>
        <begin position="1"/>
        <end position="626"/>
    </location>
</feature>
<feature type="chain" id="PRO_0000378593" description="p3" evidence="1">
    <location>
        <begin position="627"/>
        <end position="653"/>
    </location>
</feature>
<feature type="region of interest" description="Involved in viral assembly and export" evidence="2">
    <location>
        <begin position="37"/>
        <end position="60"/>
    </location>
</feature>
<feature type="region of interest" description="Disordered" evidence="3">
    <location>
        <begin position="179"/>
        <end position="286"/>
    </location>
</feature>
<feature type="region of interest" description="Disordered" evidence="3">
    <location>
        <begin position="482"/>
        <end position="653"/>
    </location>
</feature>
<feature type="region of interest" description="Nucleic acid-binding; GR-box 1" evidence="1">
    <location>
        <begin position="490"/>
        <end position="515"/>
    </location>
</feature>
<feature type="region of interest" description="GR-box 2" evidence="1">
    <location>
        <begin position="540"/>
        <end position="561"/>
    </location>
</feature>
<feature type="region of interest" description="GR-box 3" evidence="1">
    <location>
        <begin position="591"/>
        <end position="623"/>
    </location>
</feature>
<feature type="short sequence motif" description="PTAP/PSAP motif">
    <location>
        <begin position="289"/>
        <end position="292"/>
    </location>
</feature>
<feature type="short sequence motif" description="Nuclear localization signal" evidence="1">
    <location>
        <begin position="540"/>
        <end position="561"/>
    </location>
</feature>
<feature type="compositionally biased region" description="Basic and acidic residues" evidence="3">
    <location>
        <begin position="262"/>
        <end position="278"/>
    </location>
</feature>
<feature type="compositionally biased region" description="Low complexity" evidence="3">
    <location>
        <begin position="526"/>
        <end position="543"/>
    </location>
</feature>
<feature type="compositionally biased region" description="Polar residues" evidence="3">
    <location>
        <begin position="564"/>
        <end position="579"/>
    </location>
</feature>
<feature type="compositionally biased region" description="Low complexity" evidence="3">
    <location>
        <begin position="609"/>
        <end position="618"/>
    </location>
</feature>
<feature type="compositionally biased region" description="Low complexity" evidence="3">
    <location>
        <begin position="629"/>
        <end position="653"/>
    </location>
</feature>
<feature type="site" description="Cleavage; by viral protease; low efficiency" evidence="2">
    <location>
        <begin position="316"/>
        <end position="317"/>
    </location>
</feature>
<feature type="site" description="Cleavage; by viral protease; low efficiency" evidence="2">
    <location>
        <begin position="344"/>
        <end position="345"/>
    </location>
</feature>
<feature type="site" description="Cleavage; by viral protease; low efficiency" evidence="2">
    <location>
        <begin position="357"/>
        <end position="358"/>
    </location>
</feature>
<feature type="site" description="Cleavage; by viral protease; partial" evidence="1">
    <location>
        <begin position="626"/>
        <end position="627"/>
    </location>
</feature>
<evidence type="ECO:0000250" key="1"/>
<evidence type="ECO:0000255" key="2"/>
<evidence type="ECO:0000256" key="3">
    <source>
        <dbReference type="SAM" id="MobiDB-lite"/>
    </source>
</evidence>
<protein>
    <recommendedName>
        <fullName>Gag polyprotein</fullName>
    </recommendedName>
    <alternativeName>
        <fullName>Pr71Gag</fullName>
    </alternativeName>
    <component>
        <recommendedName>
            <fullName>Gag protein</fullName>
        </recommendedName>
        <alternativeName>
            <fullName>p68Gag</fullName>
        </alternativeName>
    </component>
    <component>
        <recommendedName>
            <fullName>p3</fullName>
        </recommendedName>
        <alternativeName>
            <fullName>p3Gag</fullName>
        </alternativeName>
    </component>
</protein>